<keyword id="KW-0119">Carbohydrate metabolism</keyword>
<keyword id="KW-0136">Cellulose degradation</keyword>
<keyword id="KW-0325">Glycoprotein</keyword>
<keyword id="KW-0326">Glycosidase</keyword>
<keyword id="KW-0378">Hydrolase</keyword>
<keyword id="KW-0624">Polysaccharide degradation</keyword>
<keyword id="KW-0964">Secreted</keyword>
<keyword id="KW-0732">Signal</keyword>
<feature type="signal peptide" evidence="2">
    <location>
        <begin position="1"/>
        <end position="19"/>
    </location>
</feature>
<feature type="chain" id="PRO_0000394094" description="Probable beta-glucosidase A">
    <location>
        <begin position="20"/>
        <end position="861"/>
    </location>
</feature>
<feature type="active site" evidence="1">
    <location>
        <position position="281"/>
    </location>
</feature>
<feature type="glycosylation site" description="N-linked (GlcNAc...) asparagine" evidence="2">
    <location>
        <position position="62"/>
    </location>
</feature>
<feature type="glycosylation site" description="N-linked (GlcNAc...) asparagine" evidence="2">
    <location>
        <position position="212"/>
    </location>
</feature>
<feature type="glycosylation site" description="N-linked (GlcNAc...) asparagine" evidence="2">
    <location>
        <position position="253"/>
    </location>
</feature>
<feature type="glycosylation site" description="N-linked (GlcNAc...) asparagine" evidence="2">
    <location>
        <position position="316"/>
    </location>
</feature>
<feature type="glycosylation site" description="N-linked (GlcNAc...) asparagine" evidence="2">
    <location>
        <position position="323"/>
    </location>
</feature>
<feature type="glycosylation site" description="N-linked (GlcNAc...) asparagine" evidence="2">
    <location>
        <position position="355"/>
    </location>
</feature>
<feature type="glycosylation site" description="N-linked (GlcNAc...) asparagine" evidence="2">
    <location>
        <position position="443"/>
    </location>
</feature>
<feature type="glycosylation site" description="N-linked (GlcNAc...) asparagine" evidence="2">
    <location>
        <position position="524"/>
    </location>
</feature>
<feature type="glycosylation site" description="N-linked (GlcNAc...) asparagine" evidence="2">
    <location>
        <position position="543"/>
    </location>
</feature>
<feature type="glycosylation site" description="N-linked (GlcNAc...) asparagine" evidence="2">
    <location>
        <position position="565"/>
    </location>
</feature>
<feature type="glycosylation site" description="N-linked (GlcNAc...) asparagine" evidence="2">
    <location>
        <position position="669"/>
    </location>
</feature>
<feature type="glycosylation site" description="N-linked (GlcNAc...) asparagine" evidence="2">
    <location>
        <position position="713"/>
    </location>
</feature>
<feature type="glycosylation site" description="N-linked (GlcNAc...) asparagine" evidence="2">
    <location>
        <position position="846"/>
    </location>
</feature>
<dbReference type="EC" id="3.2.1.21"/>
<dbReference type="EMBL" id="EQ963483">
    <property type="protein sequence ID" value="EED47060.1"/>
    <property type="molecule type" value="Genomic_DNA"/>
</dbReference>
<dbReference type="RefSeq" id="XP_002383240.1">
    <property type="nucleotide sequence ID" value="XM_002383199.1"/>
</dbReference>
<dbReference type="SMR" id="B8NRX2"/>
<dbReference type="STRING" id="332952.B8NRX2"/>
<dbReference type="GlyCosmos" id="B8NRX2">
    <property type="glycosylation" value="13 sites, No reported glycans"/>
</dbReference>
<dbReference type="EnsemblFungi" id="EED47060">
    <property type="protein sequence ID" value="EED47060"/>
    <property type="gene ID" value="AFLA_051140"/>
</dbReference>
<dbReference type="VEuPathDB" id="FungiDB:AFLA_011002"/>
<dbReference type="eggNOG" id="ENOG502QR4D">
    <property type="taxonomic scope" value="Eukaryota"/>
</dbReference>
<dbReference type="HOGENOM" id="CLU_004542_2_0_1"/>
<dbReference type="OMA" id="YYPSPWA"/>
<dbReference type="UniPathway" id="UPA00696"/>
<dbReference type="GO" id="GO:0005576">
    <property type="term" value="C:extracellular region"/>
    <property type="evidence" value="ECO:0007669"/>
    <property type="project" value="UniProtKB-SubCell"/>
</dbReference>
<dbReference type="GO" id="GO:0008422">
    <property type="term" value="F:beta-glucosidase activity"/>
    <property type="evidence" value="ECO:0007669"/>
    <property type="project" value="UniProtKB-EC"/>
</dbReference>
<dbReference type="GO" id="GO:0030245">
    <property type="term" value="P:cellulose catabolic process"/>
    <property type="evidence" value="ECO:0007669"/>
    <property type="project" value="UniProtKB-UniPathway"/>
</dbReference>
<dbReference type="FunFam" id="2.60.40.10:FF:001391">
    <property type="entry name" value="Beta-glucosidase"/>
    <property type="match status" value="1"/>
</dbReference>
<dbReference type="FunFam" id="3.20.20.300:FF:000002">
    <property type="entry name" value="Probable beta-glucosidase"/>
    <property type="match status" value="1"/>
</dbReference>
<dbReference type="FunFam" id="3.40.50.1700:FF:000003">
    <property type="entry name" value="Probable beta-glucosidase"/>
    <property type="match status" value="1"/>
</dbReference>
<dbReference type="Gene3D" id="3.40.50.1700">
    <property type="entry name" value="Glycoside hydrolase family 3 C-terminal domain"/>
    <property type="match status" value="1"/>
</dbReference>
<dbReference type="Gene3D" id="3.20.20.300">
    <property type="entry name" value="Glycoside hydrolase, family 3, N-terminal domain"/>
    <property type="match status" value="1"/>
</dbReference>
<dbReference type="Gene3D" id="2.60.40.10">
    <property type="entry name" value="Immunoglobulins"/>
    <property type="match status" value="1"/>
</dbReference>
<dbReference type="InterPro" id="IPR050288">
    <property type="entry name" value="Cellulose_deg_GH3"/>
</dbReference>
<dbReference type="InterPro" id="IPR026891">
    <property type="entry name" value="Fn3-like"/>
</dbReference>
<dbReference type="InterPro" id="IPR019800">
    <property type="entry name" value="Glyco_hydro_3_AS"/>
</dbReference>
<dbReference type="InterPro" id="IPR002772">
    <property type="entry name" value="Glyco_hydro_3_C"/>
</dbReference>
<dbReference type="InterPro" id="IPR036881">
    <property type="entry name" value="Glyco_hydro_3_C_sf"/>
</dbReference>
<dbReference type="InterPro" id="IPR001764">
    <property type="entry name" value="Glyco_hydro_3_N"/>
</dbReference>
<dbReference type="InterPro" id="IPR036962">
    <property type="entry name" value="Glyco_hydro_3_N_sf"/>
</dbReference>
<dbReference type="InterPro" id="IPR017853">
    <property type="entry name" value="Glycoside_hydrolase_SF"/>
</dbReference>
<dbReference type="InterPro" id="IPR013783">
    <property type="entry name" value="Ig-like_fold"/>
</dbReference>
<dbReference type="PANTHER" id="PTHR42715">
    <property type="entry name" value="BETA-GLUCOSIDASE"/>
    <property type="match status" value="1"/>
</dbReference>
<dbReference type="PANTHER" id="PTHR42715:SF29">
    <property type="entry name" value="BETA-GLUCOSIDASE A-RELATED"/>
    <property type="match status" value="1"/>
</dbReference>
<dbReference type="Pfam" id="PF14310">
    <property type="entry name" value="Fn3-like"/>
    <property type="match status" value="1"/>
</dbReference>
<dbReference type="Pfam" id="PF00933">
    <property type="entry name" value="Glyco_hydro_3"/>
    <property type="match status" value="1"/>
</dbReference>
<dbReference type="Pfam" id="PF01915">
    <property type="entry name" value="Glyco_hydro_3_C"/>
    <property type="match status" value="1"/>
</dbReference>
<dbReference type="PRINTS" id="PR00133">
    <property type="entry name" value="GLHYDRLASE3"/>
</dbReference>
<dbReference type="SMART" id="SM01217">
    <property type="entry name" value="Fn3_like"/>
    <property type="match status" value="1"/>
</dbReference>
<dbReference type="SUPFAM" id="SSF51445">
    <property type="entry name" value="(Trans)glycosidases"/>
    <property type="match status" value="1"/>
</dbReference>
<dbReference type="SUPFAM" id="SSF52279">
    <property type="entry name" value="Beta-D-glucan exohydrolase, C-terminal domain"/>
    <property type="match status" value="1"/>
</dbReference>
<dbReference type="PROSITE" id="PS00775">
    <property type="entry name" value="GLYCOSYL_HYDROL_F3"/>
    <property type="match status" value="1"/>
</dbReference>
<protein>
    <recommendedName>
        <fullName>Probable beta-glucosidase A</fullName>
        <ecNumber>3.2.1.21</ecNumber>
    </recommendedName>
    <alternativeName>
        <fullName>Beta-D-glucoside glucohydrolase A</fullName>
    </alternativeName>
    <alternativeName>
        <fullName>Cellobiase A</fullName>
    </alternativeName>
    <alternativeName>
        <fullName>Gentiobiase A</fullName>
    </alternativeName>
</protein>
<accession>B8NRX2</accession>
<sequence length="861" mass="93415">MKLGWIEVAALAAASVVSAKDDLAYSPPFYPSPWADGQGEWAEVYKRAVDIVSQMTLTEKVNLTTGTGWQLERCVGQTGSVPRLNIPSLCLQDSPLGIRFSDYNSAFPAGVNVAATWDKTLAYLRGQAMGEEFSDKGIDVQLGPAAGPLGAHPDGGRNWEGFSPDPALTGVLFAETIRGIQDAGVIATAKHYIMNEQEHFRQQPEAAGYGFNVSDSLSSNVDDKTMHELYLWPFADAVRAGVGAVMCSYNQINNSYGCENSETLNKLLKAELGFQGFVMSDWTAHHSGVGAALAGLDMSMPGDVTFDSGTSFWGANLTVGVLNGTIPQWRVDDMAVRIMAAYYKVGRDTKYTPPNFSSWTRDEYGFAHNHVSEGAYERVNEFVDVQRDHADLIRRIGAQSTVLLKNKGALPLSRKEKLVALLGEDAGSNSWGANGCDDRGCDNGTLAMAWGSGTANFPYLVTPEQAIQNEVLQGRGNVFAVTDSWALDKIAAAARQASVSLVFVNSDSGEGYLSVDGNEGDRNNITLWKNGDNVVKTAAENCNNTVVIIHSVGPVLIDEWYDHPNVTGILWAGLPGQESGNSIADVLYGRVNPGAKSPFTWGKTRESYGSPLVKDANNGNGAPQSDFTQGVFIDYRHFDKFNETPIYEFGYGLSYTTFELSDLHVQPLNASRYTPTSGMTEAAKNFGEIGDASEYVYPEGLERIHEFIYPWINSTDLKASSDDSNYGWEDSKYIPEGATDGSAQPLLPASGGAGGNPGLYEDLFRVSVKVKNTGNVAGDEVPQLYVSLGGPNEPKVVLRKFERIHLAPSQEAVWTTTLTRRDLANWDVSAQDWTVTPYPKTIYVGNSSRKLPLQASLPKAQ</sequence>
<gene>
    <name type="primary">bglA</name>
    <name type="synonym">bgl1</name>
    <name type="ORF">AFLA_051140</name>
</gene>
<reference key="1">
    <citation type="journal article" date="2015" name="Genome Announc.">
        <title>Genome sequence of Aspergillus flavus NRRL 3357, a strain that causes aflatoxin contamination of food and feed.</title>
        <authorList>
            <person name="Nierman W.C."/>
            <person name="Yu J."/>
            <person name="Fedorova-Abrams N.D."/>
            <person name="Losada L."/>
            <person name="Cleveland T.E."/>
            <person name="Bhatnagar D."/>
            <person name="Bennett J.W."/>
            <person name="Dean R."/>
            <person name="Payne G.A."/>
        </authorList>
    </citation>
    <scope>NUCLEOTIDE SEQUENCE [LARGE SCALE GENOMIC DNA]</scope>
    <source>
        <strain>ATCC 200026 / FGSC A1120 / IAM 13836 / NRRL 3357 / JCM 12722 / SRRC 167</strain>
    </source>
</reference>
<organism>
    <name type="scientific">Aspergillus flavus (strain ATCC 200026 / FGSC A1120 / IAM 13836 / NRRL 3357 / JCM 12722 / SRRC 167)</name>
    <dbReference type="NCBI Taxonomy" id="332952"/>
    <lineage>
        <taxon>Eukaryota</taxon>
        <taxon>Fungi</taxon>
        <taxon>Dikarya</taxon>
        <taxon>Ascomycota</taxon>
        <taxon>Pezizomycotina</taxon>
        <taxon>Eurotiomycetes</taxon>
        <taxon>Eurotiomycetidae</taxon>
        <taxon>Eurotiales</taxon>
        <taxon>Aspergillaceae</taxon>
        <taxon>Aspergillus</taxon>
        <taxon>Aspergillus subgen. Circumdati</taxon>
    </lineage>
</organism>
<name>BGLA_ASPFN</name>
<proteinExistence type="inferred from homology"/>
<comment type="function">
    <text evidence="1">Beta-glucosidases are one of a number of cellulolytic enzymes involved in the degradation of cellulosic biomass. Catalyzes the last step releasing glucose from the inhibitory cellobiose (By similarity).</text>
</comment>
<comment type="catalytic activity">
    <reaction>
        <text>Hydrolysis of terminal, non-reducing beta-D-glucosyl residues with release of beta-D-glucose.</text>
        <dbReference type="EC" id="3.2.1.21"/>
    </reaction>
</comment>
<comment type="pathway">
    <text>Glycan metabolism; cellulose degradation.</text>
</comment>
<comment type="subcellular location">
    <subcellularLocation>
        <location evidence="1">Secreted</location>
    </subcellularLocation>
</comment>
<comment type="similarity">
    <text evidence="3">Belongs to the glycosyl hydrolase 3 family.</text>
</comment>
<evidence type="ECO:0000250" key="1"/>
<evidence type="ECO:0000255" key="2"/>
<evidence type="ECO:0000305" key="3"/>